<proteinExistence type="evidence at protein level"/>
<protein>
    <recommendedName>
        <fullName>Vesicle-associated membrane protein 727</fullName>
        <shortName>AtVAMP727</shortName>
    </recommendedName>
</protein>
<feature type="chain" id="PRO_0000206760" description="Vesicle-associated membrane protein 727">
    <location>
        <begin position="1"/>
        <end position="240"/>
    </location>
</feature>
<feature type="topological domain" description="Cytoplasmic" evidence="3">
    <location>
        <begin position="1"/>
        <end position="215"/>
    </location>
</feature>
<feature type="transmembrane region" description="Helical; Anchor for type IV membrane protein" evidence="3">
    <location>
        <begin position="216"/>
        <end position="236"/>
    </location>
</feature>
<feature type="topological domain" description="Vesicular" evidence="3">
    <location>
        <begin position="237"/>
        <end position="240"/>
    </location>
</feature>
<feature type="domain" description="Longin" evidence="4">
    <location>
        <begin position="6"/>
        <end position="133"/>
    </location>
</feature>
<feature type="domain" description="v-SNARE coiled-coil homology" evidence="5">
    <location>
        <begin position="149"/>
        <end position="209"/>
    </location>
</feature>
<reference key="1">
    <citation type="journal article" date="2000" name="Nature">
        <title>Sequence and analysis of chromosome 3 of the plant Arabidopsis thaliana.</title>
        <authorList>
            <person name="Salanoubat M."/>
            <person name="Lemcke K."/>
            <person name="Rieger M."/>
            <person name="Ansorge W."/>
            <person name="Unseld M."/>
            <person name="Fartmann B."/>
            <person name="Valle G."/>
            <person name="Bloecker H."/>
            <person name="Perez-Alonso M."/>
            <person name="Obermaier B."/>
            <person name="Delseny M."/>
            <person name="Boutry M."/>
            <person name="Grivell L.A."/>
            <person name="Mache R."/>
            <person name="Puigdomenech P."/>
            <person name="De Simone V."/>
            <person name="Choisne N."/>
            <person name="Artiguenave F."/>
            <person name="Robert C."/>
            <person name="Brottier P."/>
            <person name="Wincker P."/>
            <person name="Cattolico L."/>
            <person name="Weissenbach J."/>
            <person name="Saurin W."/>
            <person name="Quetier F."/>
            <person name="Schaefer M."/>
            <person name="Mueller-Auer S."/>
            <person name="Gabel C."/>
            <person name="Fuchs M."/>
            <person name="Benes V."/>
            <person name="Wurmbach E."/>
            <person name="Drzonek H."/>
            <person name="Erfle H."/>
            <person name="Jordan N."/>
            <person name="Bangert S."/>
            <person name="Wiedelmann R."/>
            <person name="Kranz H."/>
            <person name="Voss H."/>
            <person name="Holland R."/>
            <person name="Brandt P."/>
            <person name="Nyakatura G."/>
            <person name="Vezzi A."/>
            <person name="D'Angelo M."/>
            <person name="Pallavicini A."/>
            <person name="Toppo S."/>
            <person name="Simionati B."/>
            <person name="Conrad A."/>
            <person name="Hornischer K."/>
            <person name="Kauer G."/>
            <person name="Loehnert T.-H."/>
            <person name="Nordsiek G."/>
            <person name="Reichelt J."/>
            <person name="Scharfe M."/>
            <person name="Schoen O."/>
            <person name="Bargues M."/>
            <person name="Terol J."/>
            <person name="Climent J."/>
            <person name="Navarro P."/>
            <person name="Collado C."/>
            <person name="Perez-Perez A."/>
            <person name="Ottenwaelder B."/>
            <person name="Duchemin D."/>
            <person name="Cooke R."/>
            <person name="Laudie M."/>
            <person name="Berger-Llauro C."/>
            <person name="Purnelle B."/>
            <person name="Masuy D."/>
            <person name="de Haan M."/>
            <person name="Maarse A.C."/>
            <person name="Alcaraz J.-P."/>
            <person name="Cottet A."/>
            <person name="Casacuberta E."/>
            <person name="Monfort A."/>
            <person name="Argiriou A."/>
            <person name="Flores M."/>
            <person name="Liguori R."/>
            <person name="Vitale D."/>
            <person name="Mannhaupt G."/>
            <person name="Haase D."/>
            <person name="Schoof H."/>
            <person name="Rudd S."/>
            <person name="Zaccaria P."/>
            <person name="Mewes H.-W."/>
            <person name="Mayer K.F.X."/>
            <person name="Kaul S."/>
            <person name="Town C.D."/>
            <person name="Koo H.L."/>
            <person name="Tallon L.J."/>
            <person name="Jenkins J."/>
            <person name="Rooney T."/>
            <person name="Rizzo M."/>
            <person name="Walts A."/>
            <person name="Utterback T."/>
            <person name="Fujii C.Y."/>
            <person name="Shea T.P."/>
            <person name="Creasy T.H."/>
            <person name="Haas B."/>
            <person name="Maiti R."/>
            <person name="Wu D."/>
            <person name="Peterson J."/>
            <person name="Van Aken S."/>
            <person name="Pai G."/>
            <person name="Militscher J."/>
            <person name="Sellers P."/>
            <person name="Gill J.E."/>
            <person name="Feldblyum T.V."/>
            <person name="Preuss D."/>
            <person name="Lin X."/>
            <person name="Nierman W.C."/>
            <person name="Salzberg S.L."/>
            <person name="White O."/>
            <person name="Venter J.C."/>
            <person name="Fraser C.M."/>
            <person name="Kaneko T."/>
            <person name="Nakamura Y."/>
            <person name="Sato S."/>
            <person name="Kato T."/>
            <person name="Asamizu E."/>
            <person name="Sasamoto S."/>
            <person name="Kimura T."/>
            <person name="Idesawa K."/>
            <person name="Kawashima K."/>
            <person name="Kishida Y."/>
            <person name="Kiyokawa C."/>
            <person name="Kohara M."/>
            <person name="Matsumoto M."/>
            <person name="Matsuno A."/>
            <person name="Muraki A."/>
            <person name="Nakayama S."/>
            <person name="Nakazaki N."/>
            <person name="Shinpo S."/>
            <person name="Takeuchi C."/>
            <person name="Wada T."/>
            <person name="Watanabe A."/>
            <person name="Yamada M."/>
            <person name="Yasuda M."/>
            <person name="Tabata S."/>
        </authorList>
    </citation>
    <scope>NUCLEOTIDE SEQUENCE [LARGE SCALE GENOMIC DNA]</scope>
    <source>
        <strain>cv. Columbia</strain>
    </source>
</reference>
<reference key="2">
    <citation type="journal article" date="2017" name="Plant J.">
        <title>Araport11: a complete reannotation of the Arabidopsis thaliana reference genome.</title>
        <authorList>
            <person name="Cheng C.Y."/>
            <person name="Krishnakumar V."/>
            <person name="Chan A.P."/>
            <person name="Thibaud-Nissen F."/>
            <person name="Schobel S."/>
            <person name="Town C.D."/>
        </authorList>
    </citation>
    <scope>GENOME REANNOTATION</scope>
    <source>
        <strain>cv. Columbia</strain>
    </source>
</reference>
<reference key="3">
    <citation type="submission" date="2004-03" db="EMBL/GenBank/DDBJ databases">
        <title>Arabidopsis ORF clones.</title>
        <authorList>
            <person name="Cheuk R.F."/>
            <person name="Chen H."/>
            <person name="Kim C.J."/>
            <person name="Shinn P."/>
            <person name="Ecker J.R."/>
        </authorList>
    </citation>
    <scope>NUCLEOTIDE SEQUENCE [LARGE SCALE MRNA]</scope>
    <source>
        <strain>cv. Columbia</strain>
    </source>
</reference>
<reference key="4">
    <citation type="submission" date="2006-07" db="EMBL/GenBank/DDBJ databases">
        <title>Large-scale analysis of RIKEN Arabidopsis full-length (RAFL) cDNAs.</title>
        <authorList>
            <person name="Totoki Y."/>
            <person name="Seki M."/>
            <person name="Ishida J."/>
            <person name="Nakajima M."/>
            <person name="Enju A."/>
            <person name="Kamiya A."/>
            <person name="Narusaka M."/>
            <person name="Shin-i T."/>
            <person name="Nakagawa M."/>
            <person name="Sakamoto N."/>
            <person name="Oishi K."/>
            <person name="Kohara Y."/>
            <person name="Kobayashi M."/>
            <person name="Toyoda A."/>
            <person name="Sakaki Y."/>
            <person name="Sakurai T."/>
            <person name="Iida K."/>
            <person name="Akiyama K."/>
            <person name="Satou M."/>
            <person name="Toyoda T."/>
            <person name="Konagaya A."/>
            <person name="Carninci P."/>
            <person name="Kawai J."/>
            <person name="Hayashizaki Y."/>
            <person name="Shinozaki K."/>
        </authorList>
    </citation>
    <scope>NUCLEOTIDE SEQUENCE [LARGE SCALE MRNA]</scope>
    <source>
        <strain>cv. Columbia</strain>
    </source>
</reference>
<reference key="5">
    <citation type="journal article" date="2004" name="Cell Struct. Funct.">
        <title>Systematic analysis of SNARE molecules in Arabidopsis: dissection of the post-Golgi network in plant cells.</title>
        <authorList>
            <person name="Uemura T."/>
            <person name="Ueda T."/>
            <person name="Ohniwa R.L."/>
            <person name="Nakano A."/>
            <person name="Takeyasu K."/>
            <person name="Sato M.H."/>
        </authorList>
    </citation>
    <scope>TISSUE SPECIFICITY</scope>
    <scope>SUBCELLULAR LOCATION</scope>
</reference>
<reference key="6">
    <citation type="journal article" date="2009" name="BMC Genomics">
        <title>Comparative analysis of plant genomes allows the definition of the 'Phytolongins': a novel non-SNARE longin domain protein family.</title>
        <authorList>
            <person name="Vedovato M."/>
            <person name="Rossi V."/>
            <person name="Dacks J.B."/>
            <person name="Filippini F."/>
        </authorList>
    </citation>
    <scope>GENE FAMILY</scope>
    <scope>NOMENCLATURE</scope>
    <scope>3D-STRUCTURE MODELING</scope>
</reference>
<reference key="7">
    <citation type="journal article" date="2018" name="Proc. Natl. Acad. Sci. U.S.A.">
        <title>Distinct sets of tethering complexes, SNARE complexes, and Rab GTPases mediate membrane fusion at the vacuole in Arabidopsis.</title>
        <authorList>
            <person name="Takemoto K."/>
            <person name="Ebine K."/>
            <person name="Askani J.C."/>
            <person name="Krueger F."/>
            <person name="Gonzalez Z.A."/>
            <person name="Ito E."/>
            <person name="Goh T."/>
            <person name="Schumacher K."/>
            <person name="Nakano A."/>
            <person name="Ueda T."/>
        </authorList>
    </citation>
    <scope>SUBUNIT</scope>
    <scope>SUBCELLULAR LOCATION</scope>
</reference>
<accession>Q9M376</accession>
<accession>Q53XE0</accession>
<comment type="function">
    <text evidence="1">Involved in the targeting and/or fusion of transport vesicles to their target membrane.</text>
</comment>
<comment type="subunit">
    <text evidence="7">Interacts with subunits of the class C core vacuole/endosome tethering (CORVET) complex including VPS11, VCL1, VPS18, VPS33, VPS3 and VPS8.</text>
</comment>
<comment type="subcellular location">
    <subcellularLocation>
        <location evidence="6">Early endosome membrane</location>
        <topology evidence="2">Single-pass type IV membrane protein</topology>
    </subcellularLocation>
    <subcellularLocation>
        <location evidence="6">Endosome membrane</location>
        <topology evidence="2">Single-pass type IV membrane protein</topology>
    </subcellularLocation>
    <text evidence="7">Co-localizes with VPS3.</text>
</comment>
<comment type="tissue specificity">
    <text evidence="6">Highly expressed in flowers. Detected in leaves, stems and roots.</text>
</comment>
<comment type="similarity">
    <text evidence="8">Belongs to the synaptobrevin family.</text>
</comment>
<organism>
    <name type="scientific">Arabidopsis thaliana</name>
    <name type="common">Mouse-ear cress</name>
    <dbReference type="NCBI Taxonomy" id="3702"/>
    <lineage>
        <taxon>Eukaryota</taxon>
        <taxon>Viridiplantae</taxon>
        <taxon>Streptophyta</taxon>
        <taxon>Embryophyta</taxon>
        <taxon>Tracheophyta</taxon>
        <taxon>Spermatophyta</taxon>
        <taxon>Magnoliopsida</taxon>
        <taxon>eudicotyledons</taxon>
        <taxon>Gunneridae</taxon>
        <taxon>Pentapetalae</taxon>
        <taxon>rosids</taxon>
        <taxon>malvids</taxon>
        <taxon>Brassicales</taxon>
        <taxon>Brassicaceae</taxon>
        <taxon>Camelineae</taxon>
        <taxon>Arabidopsis</taxon>
    </lineage>
</organism>
<keyword id="KW-0967">Endosome</keyword>
<keyword id="KW-0472">Membrane</keyword>
<keyword id="KW-0653">Protein transport</keyword>
<keyword id="KW-1185">Reference proteome</keyword>
<keyword id="KW-0812">Transmembrane</keyword>
<keyword id="KW-1133">Transmembrane helix</keyword>
<keyword id="KW-0813">Transport</keyword>
<sequence length="240" mass="27460">MSQKGLIYSFVAKGTVVLAEHTPYSGNFSTIAVQCLQKLPTNSSKYTYSCDGHTFNFLVDNGFVFLVVADESTGRSVPFVFLERVKEDFKKRYEASIKNDERHPLADEDEDDDLFGDRFSVAYNLDREFGPILKEHMQYCMSHPEEMSKLSKLKAQITEVKGIMMDNIEKVLDRGEKIELLVDKTENLQFQADSFQRQGRQLRRKMWLQSLQMKLMVAGAVFSFILIVWVVACGGFKCSS</sequence>
<gene>
    <name type="primary">VAMP727</name>
    <name type="ordered locus">At3g54300</name>
    <name type="ORF">F24B22.260</name>
</gene>
<dbReference type="EMBL" id="AL132957">
    <property type="protein sequence ID" value="CAB71004.1"/>
    <property type="molecule type" value="Genomic_DNA"/>
</dbReference>
<dbReference type="EMBL" id="CP002686">
    <property type="protein sequence ID" value="AEE79210.1"/>
    <property type="molecule type" value="Genomic_DNA"/>
</dbReference>
<dbReference type="EMBL" id="CP002686">
    <property type="protein sequence ID" value="AEE79211.1"/>
    <property type="molecule type" value="Genomic_DNA"/>
</dbReference>
<dbReference type="EMBL" id="CP002686">
    <property type="protein sequence ID" value="ANM64005.1"/>
    <property type="molecule type" value="Genomic_DNA"/>
</dbReference>
<dbReference type="EMBL" id="BT011606">
    <property type="protein sequence ID" value="AAS47612.1"/>
    <property type="molecule type" value="mRNA"/>
</dbReference>
<dbReference type="EMBL" id="BT012242">
    <property type="protein sequence ID" value="AAS76729.1"/>
    <property type="molecule type" value="mRNA"/>
</dbReference>
<dbReference type="EMBL" id="AK229117">
    <property type="protein sequence ID" value="BAF00993.1"/>
    <property type="molecule type" value="mRNA"/>
</dbReference>
<dbReference type="PIR" id="T47589">
    <property type="entry name" value="T47589"/>
</dbReference>
<dbReference type="RefSeq" id="NP_001078283.1">
    <property type="nucleotide sequence ID" value="NM_001084814.2"/>
</dbReference>
<dbReference type="RefSeq" id="NP_001326058.1">
    <property type="nucleotide sequence ID" value="NM_001339657.1"/>
</dbReference>
<dbReference type="RefSeq" id="NP_190998.1">
    <property type="nucleotide sequence ID" value="NM_115290.5"/>
</dbReference>
<dbReference type="SMR" id="Q9M376"/>
<dbReference type="BioGRID" id="9914">
    <property type="interactions" value="6"/>
</dbReference>
<dbReference type="FunCoup" id="Q9M376">
    <property type="interactions" value="863"/>
</dbReference>
<dbReference type="IntAct" id="Q9M376">
    <property type="interactions" value="3"/>
</dbReference>
<dbReference type="STRING" id="3702.Q9M376"/>
<dbReference type="iPTMnet" id="Q9M376"/>
<dbReference type="PaxDb" id="3702-AT3G54300.1"/>
<dbReference type="ProteomicsDB" id="228545"/>
<dbReference type="EnsemblPlants" id="AT3G54300.1">
    <property type="protein sequence ID" value="AT3G54300.1"/>
    <property type="gene ID" value="AT3G54300"/>
</dbReference>
<dbReference type="EnsemblPlants" id="AT3G54300.2">
    <property type="protein sequence ID" value="AT3G54300.2"/>
    <property type="gene ID" value="AT3G54300"/>
</dbReference>
<dbReference type="EnsemblPlants" id="AT3G54300.3">
    <property type="protein sequence ID" value="AT3G54300.3"/>
    <property type="gene ID" value="AT3G54300"/>
</dbReference>
<dbReference type="GeneID" id="824597"/>
<dbReference type="Gramene" id="AT3G54300.1">
    <property type="protein sequence ID" value="AT3G54300.1"/>
    <property type="gene ID" value="AT3G54300"/>
</dbReference>
<dbReference type="Gramene" id="AT3G54300.2">
    <property type="protein sequence ID" value="AT3G54300.2"/>
    <property type="gene ID" value="AT3G54300"/>
</dbReference>
<dbReference type="Gramene" id="AT3G54300.3">
    <property type="protein sequence ID" value="AT3G54300.3"/>
    <property type="gene ID" value="AT3G54300"/>
</dbReference>
<dbReference type="KEGG" id="ath:AT3G54300"/>
<dbReference type="Araport" id="AT3G54300"/>
<dbReference type="TAIR" id="AT3G54300">
    <property type="gene designation" value="VAMP727"/>
</dbReference>
<dbReference type="eggNOG" id="KOG0859">
    <property type="taxonomic scope" value="Eukaryota"/>
</dbReference>
<dbReference type="HOGENOM" id="CLU_064620_1_0_1"/>
<dbReference type="InParanoid" id="Q9M376"/>
<dbReference type="OMA" id="RLNFFMW"/>
<dbReference type="OrthoDB" id="248747at2759"/>
<dbReference type="PhylomeDB" id="Q9M376"/>
<dbReference type="PRO" id="PR:Q9M376"/>
<dbReference type="Proteomes" id="UP000006548">
    <property type="component" value="Chromosome 3"/>
</dbReference>
<dbReference type="ExpressionAtlas" id="Q9M376">
    <property type="expression patterns" value="baseline and differential"/>
</dbReference>
<dbReference type="GO" id="GO:0033263">
    <property type="term" value="C:CORVET complex"/>
    <property type="evidence" value="ECO:0000314"/>
    <property type="project" value="UniProtKB"/>
</dbReference>
<dbReference type="GO" id="GO:0031901">
    <property type="term" value="C:early endosome membrane"/>
    <property type="evidence" value="ECO:0007669"/>
    <property type="project" value="UniProtKB-SubCell"/>
</dbReference>
<dbReference type="GO" id="GO:0005768">
    <property type="term" value="C:endosome"/>
    <property type="evidence" value="ECO:0000314"/>
    <property type="project" value="TAIR"/>
</dbReference>
<dbReference type="GO" id="GO:0031201">
    <property type="term" value="C:SNARE complex"/>
    <property type="evidence" value="ECO:0000353"/>
    <property type="project" value="TAIR"/>
</dbReference>
<dbReference type="GO" id="GO:0006623">
    <property type="term" value="P:protein targeting to vacuole"/>
    <property type="evidence" value="ECO:0000315"/>
    <property type="project" value="TAIR"/>
</dbReference>
<dbReference type="GO" id="GO:0007033">
    <property type="term" value="P:vacuole organization"/>
    <property type="evidence" value="ECO:0000315"/>
    <property type="project" value="TAIR"/>
</dbReference>
<dbReference type="GO" id="GO:0016192">
    <property type="term" value="P:vesicle-mediated transport"/>
    <property type="evidence" value="ECO:0007669"/>
    <property type="project" value="InterPro"/>
</dbReference>
<dbReference type="CDD" id="cd14824">
    <property type="entry name" value="Longin"/>
    <property type="match status" value="1"/>
</dbReference>
<dbReference type="CDD" id="cd15843">
    <property type="entry name" value="R-SNARE"/>
    <property type="match status" value="1"/>
</dbReference>
<dbReference type="FunFam" id="1.20.5.110:FF:000047">
    <property type="entry name" value="Vesicle-associated membrane protein 727"/>
    <property type="match status" value="1"/>
</dbReference>
<dbReference type="FunFam" id="3.30.450.50:FF:000014">
    <property type="entry name" value="vesicle-associated membrane protein 727"/>
    <property type="match status" value="1"/>
</dbReference>
<dbReference type="Gene3D" id="1.20.5.110">
    <property type="match status" value="1"/>
</dbReference>
<dbReference type="Gene3D" id="3.30.450.50">
    <property type="entry name" value="Longin domain"/>
    <property type="match status" value="1"/>
</dbReference>
<dbReference type="InterPro" id="IPR011012">
    <property type="entry name" value="Longin-like_dom_sf"/>
</dbReference>
<dbReference type="InterPro" id="IPR010908">
    <property type="entry name" value="Longin_dom"/>
</dbReference>
<dbReference type="InterPro" id="IPR001388">
    <property type="entry name" value="Synaptobrevin-like"/>
</dbReference>
<dbReference type="InterPro" id="IPR051097">
    <property type="entry name" value="Synaptobrevin-like_transport"/>
</dbReference>
<dbReference type="InterPro" id="IPR042855">
    <property type="entry name" value="V_SNARE_CC"/>
</dbReference>
<dbReference type="PANTHER" id="PTHR21136">
    <property type="entry name" value="SNARE PROTEINS"/>
    <property type="match status" value="1"/>
</dbReference>
<dbReference type="PANTHER" id="PTHR21136:SF169">
    <property type="entry name" value="VESICLE-ASSOCIATED MEMBRANE PROTEIN 727"/>
    <property type="match status" value="1"/>
</dbReference>
<dbReference type="Pfam" id="PF13774">
    <property type="entry name" value="Longin"/>
    <property type="match status" value="1"/>
</dbReference>
<dbReference type="Pfam" id="PF00957">
    <property type="entry name" value="Synaptobrevin"/>
    <property type="match status" value="1"/>
</dbReference>
<dbReference type="PRINTS" id="PR00219">
    <property type="entry name" value="SYNAPTOBREVN"/>
</dbReference>
<dbReference type="SMART" id="SM01270">
    <property type="entry name" value="Longin"/>
    <property type="match status" value="1"/>
</dbReference>
<dbReference type="SUPFAM" id="SSF58038">
    <property type="entry name" value="SNARE fusion complex"/>
    <property type="match status" value="1"/>
</dbReference>
<dbReference type="SUPFAM" id="SSF64356">
    <property type="entry name" value="SNARE-like"/>
    <property type="match status" value="1"/>
</dbReference>
<dbReference type="PROSITE" id="PS50859">
    <property type="entry name" value="LONGIN"/>
    <property type="match status" value="1"/>
</dbReference>
<dbReference type="PROSITE" id="PS00417">
    <property type="entry name" value="SYNAPTOBREVIN"/>
    <property type="match status" value="1"/>
</dbReference>
<dbReference type="PROSITE" id="PS50892">
    <property type="entry name" value="V_SNARE"/>
    <property type="match status" value="1"/>
</dbReference>
<name>VA727_ARATH</name>
<evidence type="ECO:0000250" key="1"/>
<evidence type="ECO:0000250" key="2">
    <source>
        <dbReference type="UniProtKB" id="Q12255"/>
    </source>
</evidence>
<evidence type="ECO:0000255" key="3"/>
<evidence type="ECO:0000255" key="4">
    <source>
        <dbReference type="PROSITE-ProRule" id="PRU00231"/>
    </source>
</evidence>
<evidence type="ECO:0000255" key="5">
    <source>
        <dbReference type="PROSITE-ProRule" id="PRU00290"/>
    </source>
</evidence>
<evidence type="ECO:0000269" key="6">
    <source>
    </source>
</evidence>
<evidence type="ECO:0000269" key="7">
    <source>
    </source>
</evidence>
<evidence type="ECO:0000305" key="8"/>